<comment type="caution">
    <text evidence="1">Product of a dubious CDS prediction. May be a non-coding RNA.</text>
</comment>
<accession>Q8N616</accession>
<proteinExistence type="uncertain"/>
<protein>
    <recommendedName>
        <fullName>Putative uncharacterized protein encoded by LINC00311</fullName>
    </recommendedName>
</protein>
<sequence length="119" mass="12924">MVAADQGRGWNPLDGPTWEVLAMPLPLGPATQVPALFSAALVPPVSSLRPNQMLDWQRLKTPHGAPVACSLGLSGEWVPTPCALSILALLGLQLDPLFGLWGCTRTLFWSEWARESRRP</sequence>
<keyword id="KW-1185">Reference proteome</keyword>
<organism>
    <name type="scientific">Homo sapiens</name>
    <name type="common">Human</name>
    <dbReference type="NCBI Taxonomy" id="9606"/>
    <lineage>
        <taxon>Eukaryota</taxon>
        <taxon>Metazoa</taxon>
        <taxon>Chordata</taxon>
        <taxon>Craniata</taxon>
        <taxon>Vertebrata</taxon>
        <taxon>Euteleostomi</taxon>
        <taxon>Mammalia</taxon>
        <taxon>Eutheria</taxon>
        <taxon>Euarchontoglires</taxon>
        <taxon>Primates</taxon>
        <taxon>Haplorrhini</taxon>
        <taxon>Catarrhini</taxon>
        <taxon>Hominidae</taxon>
        <taxon>Homo</taxon>
    </lineage>
</organism>
<name>TM148_HUMAN</name>
<dbReference type="EMBL" id="AC092275">
    <property type="status" value="NOT_ANNOTATED_CDS"/>
    <property type="molecule type" value="Genomic_DNA"/>
</dbReference>
<dbReference type="EMBL" id="BC030801">
    <property type="protein sequence ID" value="AAH30801.1"/>
    <property type="molecule type" value="mRNA"/>
</dbReference>
<dbReference type="GlyGen" id="Q8N616">
    <property type="glycosylation" value="1 site, 1 O-linked glycan (1 site)"/>
</dbReference>
<dbReference type="BioMuta" id="HGNC:28312"/>
<dbReference type="AGR" id="HGNC:28312"/>
<dbReference type="GeneCards" id="LINC00311"/>
<dbReference type="HGNC" id="HGNC:28312">
    <property type="gene designation" value="LINC00311"/>
</dbReference>
<dbReference type="neXtProt" id="NX_Q8N616"/>
<dbReference type="InParanoid" id="Q8N616"/>
<dbReference type="PAN-GO" id="Q8N616">
    <property type="GO annotations" value="0 GO annotations based on evolutionary models"/>
</dbReference>
<dbReference type="PathwayCommons" id="Q8N616"/>
<dbReference type="SignaLink" id="Q8N616"/>
<dbReference type="Pharos" id="Q8N616">
    <property type="development level" value="Tdark"/>
</dbReference>
<dbReference type="Proteomes" id="UP000005640">
    <property type="component" value="Unplaced"/>
</dbReference>
<dbReference type="RNAct" id="Q8N616">
    <property type="molecule type" value="protein"/>
</dbReference>
<gene>
    <name type="primary">LINC00311</name>
    <name type="synonym">NCRNA00311</name>
    <name type="synonym">TMEM148</name>
</gene>
<evidence type="ECO:0000305" key="1"/>
<reference key="1">
    <citation type="journal article" date="2004" name="Nature">
        <title>The sequence and analysis of duplication-rich human chromosome 16.</title>
        <authorList>
            <person name="Martin J."/>
            <person name="Han C."/>
            <person name="Gordon L.A."/>
            <person name="Terry A."/>
            <person name="Prabhakar S."/>
            <person name="She X."/>
            <person name="Xie G."/>
            <person name="Hellsten U."/>
            <person name="Chan Y.M."/>
            <person name="Altherr M."/>
            <person name="Couronne O."/>
            <person name="Aerts A."/>
            <person name="Bajorek E."/>
            <person name="Black S."/>
            <person name="Blumer H."/>
            <person name="Branscomb E."/>
            <person name="Brown N.C."/>
            <person name="Bruno W.J."/>
            <person name="Buckingham J.M."/>
            <person name="Callen D.F."/>
            <person name="Campbell C.S."/>
            <person name="Campbell M.L."/>
            <person name="Campbell E.W."/>
            <person name="Caoile C."/>
            <person name="Challacombe J.F."/>
            <person name="Chasteen L.A."/>
            <person name="Chertkov O."/>
            <person name="Chi H.C."/>
            <person name="Christensen M."/>
            <person name="Clark L.M."/>
            <person name="Cohn J.D."/>
            <person name="Denys M."/>
            <person name="Detter J.C."/>
            <person name="Dickson M."/>
            <person name="Dimitrijevic-Bussod M."/>
            <person name="Escobar J."/>
            <person name="Fawcett J.J."/>
            <person name="Flowers D."/>
            <person name="Fotopulos D."/>
            <person name="Glavina T."/>
            <person name="Gomez M."/>
            <person name="Gonzales E."/>
            <person name="Goodstein D."/>
            <person name="Goodwin L.A."/>
            <person name="Grady D.L."/>
            <person name="Grigoriev I."/>
            <person name="Groza M."/>
            <person name="Hammon N."/>
            <person name="Hawkins T."/>
            <person name="Haydu L."/>
            <person name="Hildebrand C.E."/>
            <person name="Huang W."/>
            <person name="Israni S."/>
            <person name="Jett J."/>
            <person name="Jewett P.B."/>
            <person name="Kadner K."/>
            <person name="Kimball H."/>
            <person name="Kobayashi A."/>
            <person name="Krawczyk M.-C."/>
            <person name="Leyba T."/>
            <person name="Longmire J.L."/>
            <person name="Lopez F."/>
            <person name="Lou Y."/>
            <person name="Lowry S."/>
            <person name="Ludeman T."/>
            <person name="Manohar C.F."/>
            <person name="Mark G.A."/>
            <person name="McMurray K.L."/>
            <person name="Meincke L.J."/>
            <person name="Morgan J."/>
            <person name="Moyzis R.K."/>
            <person name="Mundt M.O."/>
            <person name="Munk A.C."/>
            <person name="Nandkeshwar R.D."/>
            <person name="Pitluck S."/>
            <person name="Pollard M."/>
            <person name="Predki P."/>
            <person name="Parson-Quintana B."/>
            <person name="Ramirez L."/>
            <person name="Rash S."/>
            <person name="Retterer J."/>
            <person name="Ricke D.O."/>
            <person name="Robinson D.L."/>
            <person name="Rodriguez A."/>
            <person name="Salamov A."/>
            <person name="Saunders E.H."/>
            <person name="Scott D."/>
            <person name="Shough T."/>
            <person name="Stallings R.L."/>
            <person name="Stalvey M."/>
            <person name="Sutherland R.D."/>
            <person name="Tapia R."/>
            <person name="Tesmer J.G."/>
            <person name="Thayer N."/>
            <person name="Thompson L.S."/>
            <person name="Tice H."/>
            <person name="Torney D.C."/>
            <person name="Tran-Gyamfi M."/>
            <person name="Tsai M."/>
            <person name="Ulanovsky L.E."/>
            <person name="Ustaszewska A."/>
            <person name="Vo N."/>
            <person name="White P.S."/>
            <person name="Williams A.L."/>
            <person name="Wills P.L."/>
            <person name="Wu J.-R."/>
            <person name="Wu K."/>
            <person name="Yang J."/>
            <person name="DeJong P."/>
            <person name="Bruce D."/>
            <person name="Doggett N.A."/>
            <person name="Deaven L."/>
            <person name="Schmutz J."/>
            <person name="Grimwood J."/>
            <person name="Richardson P."/>
            <person name="Rokhsar D.S."/>
            <person name="Eichler E.E."/>
            <person name="Gilna P."/>
            <person name="Lucas S.M."/>
            <person name="Myers R.M."/>
            <person name="Rubin E.M."/>
            <person name="Pennacchio L.A."/>
        </authorList>
    </citation>
    <scope>NUCLEOTIDE SEQUENCE [LARGE SCALE GENOMIC DNA]</scope>
</reference>
<reference key="2">
    <citation type="journal article" date="2004" name="Genome Res.">
        <title>The status, quality, and expansion of the NIH full-length cDNA project: the Mammalian Gene Collection (MGC).</title>
        <authorList>
            <consortium name="The MGC Project Team"/>
        </authorList>
    </citation>
    <scope>NUCLEOTIDE SEQUENCE [LARGE SCALE MRNA]</scope>
    <source>
        <tissue>Duodenum</tissue>
    </source>
</reference>
<feature type="chain" id="PRO_0000271027" description="Putative uncharacterized protein encoded by LINC00311">
    <location>
        <begin position="1"/>
        <end position="119"/>
    </location>
</feature>